<protein>
    <recommendedName>
        <fullName evidence="1">Small ribosomal subunit protein uS5</fullName>
    </recommendedName>
    <alternativeName>
        <fullName evidence="2">30S ribosomal protein S5</fullName>
    </alternativeName>
</protein>
<evidence type="ECO:0000255" key="1">
    <source>
        <dbReference type="HAMAP-Rule" id="MF_01307"/>
    </source>
</evidence>
<evidence type="ECO:0000305" key="2"/>
<reference key="1">
    <citation type="journal article" date="1999" name="Nature">
        <title>Evidence for lateral gene transfer between Archaea and Bacteria from genome sequence of Thermotoga maritima.</title>
        <authorList>
            <person name="Nelson K.E."/>
            <person name="Clayton R.A."/>
            <person name="Gill S.R."/>
            <person name="Gwinn M.L."/>
            <person name="Dodson R.J."/>
            <person name="Haft D.H."/>
            <person name="Hickey E.K."/>
            <person name="Peterson J.D."/>
            <person name="Nelson W.C."/>
            <person name="Ketchum K.A."/>
            <person name="McDonald L.A."/>
            <person name="Utterback T.R."/>
            <person name="Malek J.A."/>
            <person name="Linher K.D."/>
            <person name="Garrett M.M."/>
            <person name="Stewart A.M."/>
            <person name="Cotton M.D."/>
            <person name="Pratt M.S."/>
            <person name="Phillips C.A."/>
            <person name="Richardson D.L."/>
            <person name="Heidelberg J.F."/>
            <person name="Sutton G.G."/>
            <person name="Fleischmann R.D."/>
            <person name="Eisen J.A."/>
            <person name="White O."/>
            <person name="Salzberg S.L."/>
            <person name="Smith H.O."/>
            <person name="Venter J.C."/>
            <person name="Fraser C.M."/>
        </authorList>
    </citation>
    <scope>NUCLEOTIDE SEQUENCE [LARGE SCALE GENOMIC DNA]</scope>
    <source>
        <strain>ATCC 43589 / DSM 3109 / JCM 10099 / NBRC 100826 / MSB8</strain>
    </source>
</reference>
<keyword id="KW-1185">Reference proteome</keyword>
<keyword id="KW-0687">Ribonucleoprotein</keyword>
<keyword id="KW-0689">Ribosomal protein</keyword>
<keyword id="KW-0694">RNA-binding</keyword>
<keyword id="KW-0699">rRNA-binding</keyword>
<name>RS5_THEMA</name>
<sequence length="178" mass="19125">METQGVMKEIQYEEFEEKIIEIRRTSKVTKGGKNLSFRVVAIVGNKNGKVGLGIGKAREVPEAIRKAISAAKRNIVEVPVINGTIPHEVIGRQDASKVLLKPAAPGTGIIAGGTVRAVVELAGIQNILTKSLGSTNPLNLALATMNGLKNLLDPRKVAKLRDISVEEVFKGVRRENNA</sequence>
<dbReference type="EMBL" id="AE000512">
    <property type="protein sequence ID" value="AAD36549.1"/>
    <property type="molecule type" value="Genomic_DNA"/>
</dbReference>
<dbReference type="PIR" id="C72248">
    <property type="entry name" value="C72248"/>
</dbReference>
<dbReference type="RefSeq" id="NP_229283.1">
    <property type="nucleotide sequence ID" value="NC_000853.1"/>
</dbReference>
<dbReference type="SMR" id="Q9X1J2"/>
<dbReference type="FunCoup" id="Q9X1J2">
    <property type="interactions" value="432"/>
</dbReference>
<dbReference type="STRING" id="243274.TM_1483"/>
<dbReference type="PaxDb" id="243274-THEMA_06885"/>
<dbReference type="EnsemblBacteria" id="AAD36549">
    <property type="protein sequence ID" value="AAD36549"/>
    <property type="gene ID" value="TM_1483"/>
</dbReference>
<dbReference type="KEGG" id="tma:TM1483"/>
<dbReference type="KEGG" id="tmi:THEMA_06885"/>
<dbReference type="KEGG" id="tmm:Tmari_1491"/>
<dbReference type="eggNOG" id="COG0098">
    <property type="taxonomic scope" value="Bacteria"/>
</dbReference>
<dbReference type="InParanoid" id="Q9X1J2"/>
<dbReference type="OrthoDB" id="9809045at2"/>
<dbReference type="Proteomes" id="UP000008183">
    <property type="component" value="Chromosome"/>
</dbReference>
<dbReference type="GO" id="GO:0022627">
    <property type="term" value="C:cytosolic small ribosomal subunit"/>
    <property type="evidence" value="ECO:0000318"/>
    <property type="project" value="GO_Central"/>
</dbReference>
<dbReference type="GO" id="GO:0019843">
    <property type="term" value="F:rRNA binding"/>
    <property type="evidence" value="ECO:0007669"/>
    <property type="project" value="UniProtKB-UniRule"/>
</dbReference>
<dbReference type="GO" id="GO:0003735">
    <property type="term" value="F:structural constituent of ribosome"/>
    <property type="evidence" value="ECO:0000318"/>
    <property type="project" value="GO_Central"/>
</dbReference>
<dbReference type="GO" id="GO:0006412">
    <property type="term" value="P:translation"/>
    <property type="evidence" value="ECO:0000318"/>
    <property type="project" value="GO_Central"/>
</dbReference>
<dbReference type="FunFam" id="3.30.160.20:FF:000001">
    <property type="entry name" value="30S ribosomal protein S5"/>
    <property type="match status" value="1"/>
</dbReference>
<dbReference type="FunFam" id="3.30.230.10:FF:000002">
    <property type="entry name" value="30S ribosomal protein S5"/>
    <property type="match status" value="1"/>
</dbReference>
<dbReference type="Gene3D" id="3.30.160.20">
    <property type="match status" value="1"/>
</dbReference>
<dbReference type="Gene3D" id="3.30.230.10">
    <property type="match status" value="1"/>
</dbReference>
<dbReference type="HAMAP" id="MF_01307_B">
    <property type="entry name" value="Ribosomal_uS5_B"/>
    <property type="match status" value="1"/>
</dbReference>
<dbReference type="InterPro" id="IPR020568">
    <property type="entry name" value="Ribosomal_Su5_D2-typ_SF"/>
</dbReference>
<dbReference type="InterPro" id="IPR000851">
    <property type="entry name" value="Ribosomal_uS5"/>
</dbReference>
<dbReference type="InterPro" id="IPR005712">
    <property type="entry name" value="Ribosomal_uS5_bac-type"/>
</dbReference>
<dbReference type="InterPro" id="IPR005324">
    <property type="entry name" value="Ribosomal_uS5_C"/>
</dbReference>
<dbReference type="InterPro" id="IPR013810">
    <property type="entry name" value="Ribosomal_uS5_N"/>
</dbReference>
<dbReference type="InterPro" id="IPR018192">
    <property type="entry name" value="Ribosomal_uS5_N_CS"/>
</dbReference>
<dbReference type="InterPro" id="IPR014721">
    <property type="entry name" value="Ribsml_uS5_D2-typ_fold_subgr"/>
</dbReference>
<dbReference type="NCBIfam" id="TIGR01021">
    <property type="entry name" value="rpsE_bact"/>
    <property type="match status" value="1"/>
</dbReference>
<dbReference type="PANTHER" id="PTHR48277">
    <property type="entry name" value="MITOCHONDRIAL RIBOSOMAL PROTEIN S5"/>
    <property type="match status" value="1"/>
</dbReference>
<dbReference type="PANTHER" id="PTHR48277:SF1">
    <property type="entry name" value="MITOCHONDRIAL RIBOSOMAL PROTEIN S5"/>
    <property type="match status" value="1"/>
</dbReference>
<dbReference type="Pfam" id="PF00333">
    <property type="entry name" value="Ribosomal_S5"/>
    <property type="match status" value="1"/>
</dbReference>
<dbReference type="Pfam" id="PF03719">
    <property type="entry name" value="Ribosomal_S5_C"/>
    <property type="match status" value="1"/>
</dbReference>
<dbReference type="SUPFAM" id="SSF54768">
    <property type="entry name" value="dsRNA-binding domain-like"/>
    <property type="match status" value="1"/>
</dbReference>
<dbReference type="SUPFAM" id="SSF54211">
    <property type="entry name" value="Ribosomal protein S5 domain 2-like"/>
    <property type="match status" value="1"/>
</dbReference>
<dbReference type="PROSITE" id="PS00585">
    <property type="entry name" value="RIBOSOMAL_S5"/>
    <property type="match status" value="1"/>
</dbReference>
<dbReference type="PROSITE" id="PS50881">
    <property type="entry name" value="S5_DSRBD"/>
    <property type="match status" value="1"/>
</dbReference>
<accession>Q9X1J2</accession>
<proteinExistence type="inferred from homology"/>
<gene>
    <name evidence="1" type="primary">rpsE</name>
    <name type="ordered locus">TM_1483</name>
</gene>
<feature type="chain" id="PRO_0000131619" description="Small ribosomal subunit protein uS5">
    <location>
        <begin position="1"/>
        <end position="178"/>
    </location>
</feature>
<feature type="domain" description="S5 DRBM" evidence="1">
    <location>
        <begin position="15"/>
        <end position="78"/>
    </location>
</feature>
<comment type="function">
    <text evidence="1">With S4 and S12 plays an important role in translational accuracy.</text>
</comment>
<comment type="function">
    <text evidence="1">Located at the back of the 30S subunit body where it stabilizes the conformation of the head with respect to the body.</text>
</comment>
<comment type="subunit">
    <text evidence="1">Part of the 30S ribosomal subunit. Contacts proteins S4 and S8.</text>
</comment>
<comment type="domain">
    <text>The N-terminal domain interacts with the head of the 30S subunit; the C-terminal domain interacts with the body and contacts protein S4. The interaction surface between S4 and S5 is involved in control of translational fidelity.</text>
</comment>
<comment type="similarity">
    <text evidence="1">Belongs to the universal ribosomal protein uS5 family.</text>
</comment>
<organism>
    <name type="scientific">Thermotoga maritima (strain ATCC 43589 / DSM 3109 / JCM 10099 / NBRC 100826 / MSB8)</name>
    <dbReference type="NCBI Taxonomy" id="243274"/>
    <lineage>
        <taxon>Bacteria</taxon>
        <taxon>Thermotogati</taxon>
        <taxon>Thermotogota</taxon>
        <taxon>Thermotogae</taxon>
        <taxon>Thermotogales</taxon>
        <taxon>Thermotogaceae</taxon>
        <taxon>Thermotoga</taxon>
    </lineage>
</organism>